<keyword id="KW-0325">Glycoprotein</keyword>
<keyword id="KW-0472">Membrane</keyword>
<keyword id="KW-1185">Reference proteome</keyword>
<keyword id="KW-0732">Signal</keyword>
<keyword id="KW-0812">Transmembrane</keyword>
<keyword id="KW-1133">Transmembrane helix</keyword>
<gene>
    <name type="primary">U22</name>
    <name type="synonym">EJLF1</name>
</gene>
<evidence type="ECO:0000255" key="1"/>
<evidence type="ECO:0000305" key="2"/>
<proteinExistence type="inferred from homology"/>
<sequence>MVPQGCSLVWVSALYVSVIASLHIINNENSVFIATHSETELRHWLIFVKMAQRNGTAWWRMASVPINAYFERDIAFLFNPRCVIETAMGSKILCRYNKNIGVVFVDNDTKCNVSFPSGVQLQLLNQSVMESIRTKTYVVDYARKTTERGDCFISVAFCRKERRRFLSRCERFVYYCISVYLFAVVVLCSCWFALDPLFNMWA</sequence>
<reference key="1">
    <citation type="journal article" date="1994" name="J. Virol.">
        <title>Nucleotide sequence analysis of a 38.5-kilobase-pair region of the genome of human herpesvirus 6 encoding human cytomegalovirus immediate-early gene homologs and transactivating functions.</title>
        <authorList>
            <person name="Nicholas J."/>
            <person name="Martin M.E.D."/>
        </authorList>
    </citation>
    <scope>NUCLEOTIDE SEQUENCE [GENOMIC DNA]</scope>
</reference>
<reference key="2">
    <citation type="journal article" date="1995" name="Virology">
        <title>The DNA sequence of human herpesvirus-6: structure, coding content, and genome evolution.</title>
        <authorList>
            <person name="Gompels U.A."/>
            <person name="Nicholas J."/>
            <person name="Lawrence G.L."/>
            <person name="Jones M."/>
            <person name="Thomson B.J."/>
            <person name="Martin M.E.D."/>
            <person name="Efstathiou S."/>
            <person name="Craxton M.A."/>
            <person name="Macaulay H.A."/>
        </authorList>
    </citation>
    <scope>NUCLEOTIDE SEQUENCE [LARGE SCALE GENOMIC DNA]</scope>
</reference>
<organismHost>
    <name type="scientific">Homo sapiens</name>
    <name type="common">Human</name>
    <dbReference type="NCBI Taxonomy" id="9606"/>
</organismHost>
<accession>Q69557</accession>
<accession>Q69046</accession>
<dbReference type="EMBL" id="L25528">
    <property type="protein sequence ID" value="AAA16729.1"/>
    <property type="status" value="ALT_INIT"/>
    <property type="molecule type" value="Genomic_DNA"/>
</dbReference>
<dbReference type="EMBL" id="X83413">
    <property type="protein sequence ID" value="CAA58402.1"/>
    <property type="molecule type" value="Genomic_DNA"/>
</dbReference>
<dbReference type="PIR" id="T09316">
    <property type="entry name" value="T09316"/>
</dbReference>
<dbReference type="RefSeq" id="NP_042915.1">
    <property type="nucleotide sequence ID" value="NC_001664.2"/>
</dbReference>
<dbReference type="GlyCosmos" id="Q69557">
    <property type="glycosylation" value="4 sites, No reported glycans"/>
</dbReference>
<dbReference type="DNASU" id="1487978"/>
<dbReference type="GeneID" id="1487978"/>
<dbReference type="KEGG" id="vg:1487978"/>
<dbReference type="Proteomes" id="UP000009295">
    <property type="component" value="Segment"/>
</dbReference>
<dbReference type="GO" id="GO:0016020">
    <property type="term" value="C:membrane"/>
    <property type="evidence" value="ECO:0007669"/>
    <property type="project" value="UniProtKB-SubCell"/>
</dbReference>
<comment type="subcellular location">
    <subcellularLocation>
        <location evidence="2">Membrane</location>
        <topology evidence="2">Single-pass membrane protein</topology>
    </subcellularLocation>
</comment>
<comment type="sequence caution" evidence="2">
    <conflict type="erroneous initiation">
        <sequence resource="EMBL-CDS" id="AAA16729"/>
    </conflict>
    <text>Extended N-terminus.</text>
</comment>
<protein>
    <recommendedName>
        <fullName>Glycoprotein U22</fullName>
    </recommendedName>
</protein>
<name>U22_HHV6U</name>
<feature type="signal peptide" evidence="1">
    <location>
        <begin position="1"/>
        <end position="20"/>
    </location>
</feature>
<feature type="chain" id="PRO_0000342577" description="Glycoprotein U22">
    <location>
        <begin position="21"/>
        <end position="202"/>
    </location>
</feature>
<feature type="transmembrane region" description="Helical" evidence="1">
    <location>
        <begin position="172"/>
        <end position="192"/>
    </location>
</feature>
<feature type="glycosylation site" description="N-linked (GlcNAc...) asparagine; by host" evidence="1">
    <location>
        <position position="54"/>
    </location>
</feature>
<feature type="glycosylation site" description="N-linked (GlcNAc...) asparagine; by host" evidence="1">
    <location>
        <position position="107"/>
    </location>
</feature>
<feature type="glycosylation site" description="N-linked (GlcNAc...) asparagine; by host" evidence="1">
    <location>
        <position position="112"/>
    </location>
</feature>
<feature type="glycosylation site" description="N-linked (GlcNAc...) asparagine; by host" evidence="1">
    <location>
        <position position="125"/>
    </location>
</feature>
<organism>
    <name type="scientific">Human herpesvirus 6A (strain Uganda-1102)</name>
    <name type="common">HHV-6 variant A</name>
    <name type="synonym">Human B lymphotropic virus</name>
    <dbReference type="NCBI Taxonomy" id="10370"/>
    <lineage>
        <taxon>Viruses</taxon>
        <taxon>Duplodnaviria</taxon>
        <taxon>Heunggongvirae</taxon>
        <taxon>Peploviricota</taxon>
        <taxon>Herviviricetes</taxon>
        <taxon>Herpesvirales</taxon>
        <taxon>Orthoherpesviridae</taxon>
        <taxon>Betaherpesvirinae</taxon>
        <taxon>Roseolovirus</taxon>
        <taxon>Roseolovirus humanbeta6a</taxon>
        <taxon>Human betaherpesvirus 6A</taxon>
    </lineage>
</organism>